<evidence type="ECO:0000255" key="1">
    <source>
        <dbReference type="HAMAP-Rule" id="MF_00376"/>
    </source>
</evidence>
<protein>
    <recommendedName>
        <fullName evidence="1">Dephospho-CoA kinase</fullName>
        <ecNumber evidence="1">2.7.1.24</ecNumber>
    </recommendedName>
    <alternativeName>
        <fullName evidence="1">Dephosphocoenzyme A kinase</fullName>
    </alternativeName>
</protein>
<keyword id="KW-0067">ATP-binding</keyword>
<keyword id="KW-0173">Coenzyme A biosynthesis</keyword>
<keyword id="KW-0963">Cytoplasm</keyword>
<keyword id="KW-0418">Kinase</keyword>
<keyword id="KW-0547">Nucleotide-binding</keyword>
<keyword id="KW-0808">Transferase</keyword>
<sequence length="206" mass="22506">MTYIVALTGGIGSGKSTVANAFANLGVPLVDADIIARQVVEPGTSALAAIASRYGENILQQDGSLNRAALRQKIFSEQQEKAWLNSLLHPLIQQETQRQLAGIDQPYALWVVPLLVENGLHHRADRVLVVDVTPDIQLARTMARDGITRQQAENILASQVSRQQRLACADDIIDNSGDPLMIAQHVASLHHRYLKLATAAQQDLHQ</sequence>
<dbReference type="EC" id="2.7.1.24" evidence="1"/>
<dbReference type="EMBL" id="BX936398">
    <property type="protein sequence ID" value="CAH19942.1"/>
    <property type="molecule type" value="Genomic_DNA"/>
</dbReference>
<dbReference type="RefSeq" id="WP_002209319.1">
    <property type="nucleotide sequence ID" value="NZ_CP009712.1"/>
</dbReference>
<dbReference type="SMR" id="Q66EJ1"/>
<dbReference type="GeneID" id="57975280"/>
<dbReference type="KEGG" id="ypo:BZ17_1853"/>
<dbReference type="KEGG" id="yps:YPTB0702"/>
<dbReference type="PATRIC" id="fig|273123.14.peg.1967"/>
<dbReference type="UniPathway" id="UPA00241">
    <property type="reaction ID" value="UER00356"/>
</dbReference>
<dbReference type="Proteomes" id="UP000001011">
    <property type="component" value="Chromosome"/>
</dbReference>
<dbReference type="GO" id="GO:0005737">
    <property type="term" value="C:cytoplasm"/>
    <property type="evidence" value="ECO:0007669"/>
    <property type="project" value="UniProtKB-SubCell"/>
</dbReference>
<dbReference type="GO" id="GO:0005524">
    <property type="term" value="F:ATP binding"/>
    <property type="evidence" value="ECO:0007669"/>
    <property type="project" value="UniProtKB-UniRule"/>
</dbReference>
<dbReference type="GO" id="GO:0004140">
    <property type="term" value="F:dephospho-CoA kinase activity"/>
    <property type="evidence" value="ECO:0007669"/>
    <property type="project" value="UniProtKB-UniRule"/>
</dbReference>
<dbReference type="GO" id="GO:0015937">
    <property type="term" value="P:coenzyme A biosynthetic process"/>
    <property type="evidence" value="ECO:0007669"/>
    <property type="project" value="UniProtKB-UniRule"/>
</dbReference>
<dbReference type="CDD" id="cd02022">
    <property type="entry name" value="DPCK"/>
    <property type="match status" value="1"/>
</dbReference>
<dbReference type="FunFam" id="3.40.50.300:FF:000518">
    <property type="entry name" value="Dephospho-CoA kinase"/>
    <property type="match status" value="1"/>
</dbReference>
<dbReference type="Gene3D" id="3.40.50.300">
    <property type="entry name" value="P-loop containing nucleotide triphosphate hydrolases"/>
    <property type="match status" value="1"/>
</dbReference>
<dbReference type="HAMAP" id="MF_00376">
    <property type="entry name" value="Dephospho_CoA_kinase"/>
    <property type="match status" value="1"/>
</dbReference>
<dbReference type="InterPro" id="IPR001977">
    <property type="entry name" value="Depp_CoAkinase"/>
</dbReference>
<dbReference type="InterPro" id="IPR027417">
    <property type="entry name" value="P-loop_NTPase"/>
</dbReference>
<dbReference type="NCBIfam" id="TIGR00152">
    <property type="entry name" value="dephospho-CoA kinase"/>
    <property type="match status" value="1"/>
</dbReference>
<dbReference type="PANTHER" id="PTHR10695:SF46">
    <property type="entry name" value="BIFUNCTIONAL COENZYME A SYNTHASE-RELATED"/>
    <property type="match status" value="1"/>
</dbReference>
<dbReference type="PANTHER" id="PTHR10695">
    <property type="entry name" value="DEPHOSPHO-COA KINASE-RELATED"/>
    <property type="match status" value="1"/>
</dbReference>
<dbReference type="Pfam" id="PF01121">
    <property type="entry name" value="CoaE"/>
    <property type="match status" value="1"/>
</dbReference>
<dbReference type="SUPFAM" id="SSF52540">
    <property type="entry name" value="P-loop containing nucleoside triphosphate hydrolases"/>
    <property type="match status" value="1"/>
</dbReference>
<dbReference type="PROSITE" id="PS51219">
    <property type="entry name" value="DPCK"/>
    <property type="match status" value="1"/>
</dbReference>
<name>COAE_YERPS</name>
<accession>Q66EJ1</accession>
<organism>
    <name type="scientific">Yersinia pseudotuberculosis serotype I (strain IP32953)</name>
    <dbReference type="NCBI Taxonomy" id="273123"/>
    <lineage>
        <taxon>Bacteria</taxon>
        <taxon>Pseudomonadati</taxon>
        <taxon>Pseudomonadota</taxon>
        <taxon>Gammaproteobacteria</taxon>
        <taxon>Enterobacterales</taxon>
        <taxon>Yersiniaceae</taxon>
        <taxon>Yersinia</taxon>
    </lineage>
</organism>
<reference key="1">
    <citation type="journal article" date="2004" name="Proc. Natl. Acad. Sci. U.S.A.">
        <title>Insights into the evolution of Yersinia pestis through whole-genome comparison with Yersinia pseudotuberculosis.</title>
        <authorList>
            <person name="Chain P.S.G."/>
            <person name="Carniel E."/>
            <person name="Larimer F.W."/>
            <person name="Lamerdin J."/>
            <person name="Stoutland P.O."/>
            <person name="Regala W.M."/>
            <person name="Georgescu A.M."/>
            <person name="Vergez L.M."/>
            <person name="Land M.L."/>
            <person name="Motin V.L."/>
            <person name="Brubaker R.R."/>
            <person name="Fowler J."/>
            <person name="Hinnebusch J."/>
            <person name="Marceau M."/>
            <person name="Medigue C."/>
            <person name="Simonet M."/>
            <person name="Chenal-Francisque V."/>
            <person name="Souza B."/>
            <person name="Dacheux D."/>
            <person name="Elliott J.M."/>
            <person name="Derbise A."/>
            <person name="Hauser L.J."/>
            <person name="Garcia E."/>
        </authorList>
    </citation>
    <scope>NUCLEOTIDE SEQUENCE [LARGE SCALE GENOMIC DNA]</scope>
    <source>
        <strain>IP32953</strain>
    </source>
</reference>
<feature type="chain" id="PRO_0000243368" description="Dephospho-CoA kinase">
    <location>
        <begin position="1"/>
        <end position="206"/>
    </location>
</feature>
<feature type="domain" description="DPCK" evidence="1">
    <location>
        <begin position="4"/>
        <end position="200"/>
    </location>
</feature>
<feature type="binding site" evidence="1">
    <location>
        <begin position="12"/>
        <end position="17"/>
    </location>
    <ligand>
        <name>ATP</name>
        <dbReference type="ChEBI" id="CHEBI:30616"/>
    </ligand>
</feature>
<gene>
    <name evidence="1" type="primary">coaE</name>
    <name type="ordered locus">YPTB0702</name>
</gene>
<comment type="function">
    <text evidence="1">Catalyzes the phosphorylation of the 3'-hydroxyl group of dephosphocoenzyme A to form coenzyme A.</text>
</comment>
<comment type="catalytic activity">
    <reaction evidence="1">
        <text>3'-dephospho-CoA + ATP = ADP + CoA + H(+)</text>
        <dbReference type="Rhea" id="RHEA:18245"/>
        <dbReference type="ChEBI" id="CHEBI:15378"/>
        <dbReference type="ChEBI" id="CHEBI:30616"/>
        <dbReference type="ChEBI" id="CHEBI:57287"/>
        <dbReference type="ChEBI" id="CHEBI:57328"/>
        <dbReference type="ChEBI" id="CHEBI:456216"/>
        <dbReference type="EC" id="2.7.1.24"/>
    </reaction>
</comment>
<comment type="pathway">
    <text evidence="1">Cofactor biosynthesis; coenzyme A biosynthesis; CoA from (R)-pantothenate: step 5/5.</text>
</comment>
<comment type="subcellular location">
    <subcellularLocation>
        <location evidence="1">Cytoplasm</location>
    </subcellularLocation>
</comment>
<comment type="similarity">
    <text evidence="1">Belongs to the CoaE family.</text>
</comment>
<proteinExistence type="inferred from homology"/>